<accession>Q9FXT4</accession>
<accession>F4MGX5</accession>
<accession>Q0IWR2</accession>
<accession>Q84UX2</accession>
<keyword id="KW-0002">3D-structure</keyword>
<keyword id="KW-0903">Direct protein sequencing</keyword>
<keyword id="KW-1015">Disulfide bond</keyword>
<keyword id="KW-0326">Glycosidase</keyword>
<keyword id="KW-0378">Hydrolase</keyword>
<keyword id="KW-1185">Reference proteome</keyword>
<keyword id="KW-0732">Signal</keyword>
<feature type="signal peptide" evidence="1">
    <location>
        <begin position="1"/>
        <end position="55"/>
    </location>
</feature>
<feature type="chain" id="PRO_0000001000" description="Alpha-galactosidase">
    <location>
        <begin position="56"/>
        <end position="417"/>
    </location>
</feature>
<feature type="active site" description="Nucleophile" evidence="2">
    <location>
        <position position="185"/>
    </location>
</feature>
<feature type="active site" description="Proton donor" evidence="2">
    <location>
        <position position="240"/>
    </location>
</feature>
<feature type="binding site" evidence="2">
    <location>
        <position position="71"/>
    </location>
    <ligand>
        <name>alpha-D-galactose</name>
        <dbReference type="ChEBI" id="CHEBI:28061"/>
    </ligand>
</feature>
<feature type="binding site" evidence="2">
    <location>
        <position position="106"/>
    </location>
    <ligand>
        <name>alpha-D-galactose</name>
        <dbReference type="ChEBI" id="CHEBI:28061"/>
    </ligand>
</feature>
<feature type="binding site" evidence="2">
    <location>
        <position position="107"/>
    </location>
    <ligand>
        <name>alpha-D-galactose</name>
        <dbReference type="ChEBI" id="CHEBI:28061"/>
    </ligand>
</feature>
<feature type="binding site" evidence="2">
    <location>
        <position position="156"/>
    </location>
    <ligand>
        <name>alpha-D-galactose</name>
        <dbReference type="ChEBI" id="CHEBI:28061"/>
    </ligand>
</feature>
<feature type="binding site" evidence="2">
    <location>
        <position position="183"/>
    </location>
    <ligand>
        <name>alpha-D-galactose</name>
        <dbReference type="ChEBI" id="CHEBI:28061"/>
    </ligand>
</feature>
<feature type="binding site" evidence="2">
    <location>
        <position position="185"/>
    </location>
    <ligand>
        <name>alpha-D-galactose</name>
        <dbReference type="ChEBI" id="CHEBI:28061"/>
    </ligand>
</feature>
<feature type="binding site" evidence="2">
    <location>
        <position position="219"/>
    </location>
    <ligand>
        <name>alpha-D-galactose</name>
        <dbReference type="ChEBI" id="CHEBI:28061"/>
    </ligand>
</feature>
<feature type="binding site" evidence="2">
    <location>
        <position position="236"/>
    </location>
    <ligand>
        <name>alpha-D-galactose</name>
        <dbReference type="ChEBI" id="CHEBI:28061"/>
    </ligand>
</feature>
<feature type="binding site" evidence="2">
    <location>
        <position position="240"/>
    </location>
    <ligand>
        <name>alpha-D-galactose</name>
        <dbReference type="ChEBI" id="CHEBI:28061"/>
    </ligand>
</feature>
<feature type="disulfide bond" evidence="2">
    <location>
        <begin position="76"/>
        <end position="108"/>
    </location>
</feature>
<feature type="disulfide bond" evidence="2">
    <location>
        <begin position="156"/>
        <end position="187"/>
    </location>
</feature>
<feature type="strand" evidence="8">
    <location>
        <begin position="66"/>
        <end position="70"/>
    </location>
</feature>
<feature type="helix" evidence="8">
    <location>
        <begin position="71"/>
        <end position="74"/>
    </location>
</feature>
<feature type="helix" evidence="8">
    <location>
        <begin position="80"/>
        <end position="92"/>
    </location>
</feature>
<feature type="helix" evidence="8">
    <location>
        <begin position="95"/>
        <end position="98"/>
    </location>
</feature>
<feature type="strand" evidence="8">
    <location>
        <begin position="102"/>
        <end position="104"/>
    </location>
</feature>
<feature type="turn" evidence="8">
    <location>
        <begin position="124"/>
        <end position="126"/>
    </location>
</feature>
<feature type="helix" evidence="8">
    <location>
        <begin position="131"/>
        <end position="140"/>
    </location>
</feature>
<feature type="strand" evidence="8">
    <location>
        <begin position="144"/>
        <end position="154"/>
    </location>
</feature>
<feature type="strand" evidence="8">
    <location>
        <begin position="158"/>
        <end position="161"/>
    </location>
</feature>
<feature type="helix" evidence="8">
    <location>
        <begin position="167"/>
        <end position="177"/>
    </location>
</feature>
<feature type="strand" evidence="8">
    <location>
        <begin position="181"/>
        <end position="185"/>
    </location>
</feature>
<feature type="helix" evidence="8">
    <location>
        <begin position="194"/>
        <end position="208"/>
    </location>
</feature>
<feature type="strand" evidence="8">
    <location>
        <begin position="212"/>
        <end position="218"/>
    </location>
</feature>
<feature type="turn" evidence="8">
    <location>
        <begin position="219"/>
        <end position="222"/>
    </location>
</feature>
<feature type="helix" evidence="8">
    <location>
        <begin position="224"/>
        <end position="226"/>
    </location>
</feature>
<feature type="helix" evidence="8">
    <location>
        <begin position="228"/>
        <end position="230"/>
    </location>
</feature>
<feature type="strand" evidence="8">
    <location>
        <begin position="233"/>
        <end position="236"/>
    </location>
</feature>
<feature type="helix" evidence="8">
    <location>
        <begin position="245"/>
        <end position="256"/>
    </location>
</feature>
<feature type="helix" evidence="8">
    <location>
        <begin position="257"/>
        <end position="261"/>
    </location>
</feature>
<feature type="strand" evidence="8">
    <location>
        <begin position="266"/>
        <end position="269"/>
    </location>
</feature>
<feature type="strand" evidence="8">
    <location>
        <begin position="277"/>
        <end position="280"/>
    </location>
</feature>
<feature type="helix" evidence="8">
    <location>
        <begin position="282"/>
        <end position="294"/>
    </location>
</feature>
<feature type="strand" evidence="8">
    <location>
        <begin position="299"/>
        <end position="301"/>
    </location>
</feature>
<feature type="helix" evidence="8">
    <location>
        <begin position="310"/>
        <end position="316"/>
    </location>
</feature>
<feature type="helix" evidence="8">
    <location>
        <begin position="319"/>
        <end position="325"/>
    </location>
</feature>
<feature type="strand" evidence="8">
    <location>
        <begin position="334"/>
        <end position="339"/>
    </location>
</feature>
<feature type="strand" evidence="8">
    <location>
        <begin position="342"/>
        <end position="348"/>
    </location>
</feature>
<feature type="strand" evidence="8">
    <location>
        <begin position="354"/>
        <end position="360"/>
    </location>
</feature>
<feature type="strand" evidence="8">
    <location>
        <begin position="362"/>
        <end position="364"/>
    </location>
</feature>
<feature type="strand" evidence="8">
    <location>
        <begin position="366"/>
        <end position="371"/>
    </location>
</feature>
<feature type="helix" evidence="8">
    <location>
        <begin position="372"/>
        <end position="374"/>
    </location>
</feature>
<feature type="strand" evidence="8">
    <location>
        <begin position="382"/>
        <end position="387"/>
    </location>
</feature>
<feature type="turn" evidence="8">
    <location>
        <begin position="388"/>
        <end position="391"/>
    </location>
</feature>
<feature type="strand" evidence="8">
    <location>
        <begin position="392"/>
        <end position="404"/>
    </location>
</feature>
<feature type="strand" evidence="8">
    <location>
        <begin position="409"/>
        <end position="416"/>
    </location>
</feature>
<evidence type="ECO:0000269" key="1">
    <source>
    </source>
</evidence>
<evidence type="ECO:0000269" key="2">
    <source>
    </source>
</evidence>
<evidence type="ECO:0000303" key="3">
    <source>
    </source>
</evidence>
<evidence type="ECO:0000305" key="4"/>
<evidence type="ECO:0000312" key="5">
    <source>
        <dbReference type="EMBL" id="AAM92832.1"/>
    </source>
</evidence>
<evidence type="ECO:0000312" key="6">
    <source>
        <dbReference type="EMBL" id="AAP54412.1"/>
    </source>
</evidence>
<evidence type="ECO:0000312" key="7">
    <source>
        <dbReference type="EMBL" id="BAT11449.1"/>
    </source>
</evidence>
<evidence type="ECO:0007829" key="8">
    <source>
        <dbReference type="PDB" id="1UAS"/>
    </source>
</evidence>
<comment type="function">
    <text evidence="1">Hydrolyzes melibiose, raffinose and stachyose in the following decreasing order of reactivity: raffinose, melibiose, stachyose (PubMed:12423882). Acts on both the terminal alpha-galactosyl residue and the side-chain alpha-galactosyl residue of the galactomanno-oligosaccharides (PubMed:12423882).</text>
</comment>
<comment type="catalytic activity">
    <reaction evidence="1">
        <text>Hydrolysis of terminal, non-reducing alpha-D-galactose residues in alpha-D-galactosides, including galactose oligosaccharides, galactomannans and galactolipids.</text>
        <dbReference type="EC" id="3.2.1.22"/>
    </reaction>
</comment>
<comment type="catalytic activity">
    <reaction evidence="1">
        <text>melibiose + H2O = D-galactose + D-glucose</text>
        <dbReference type="Rhea" id="RHEA:28663"/>
        <dbReference type="ChEBI" id="CHEBI:4139"/>
        <dbReference type="ChEBI" id="CHEBI:4167"/>
        <dbReference type="ChEBI" id="CHEBI:15377"/>
        <dbReference type="ChEBI" id="CHEBI:28053"/>
    </reaction>
    <physiologicalReaction direction="left-to-right" evidence="1">
        <dbReference type="Rhea" id="RHEA:28664"/>
    </physiologicalReaction>
</comment>
<comment type="catalytic activity">
    <reaction evidence="1">
        <text>raffinose + H2O = sucrose + D-galactose</text>
        <dbReference type="Rhea" id="RHEA:70275"/>
        <dbReference type="ChEBI" id="CHEBI:4139"/>
        <dbReference type="ChEBI" id="CHEBI:15377"/>
        <dbReference type="ChEBI" id="CHEBI:16634"/>
        <dbReference type="ChEBI" id="CHEBI:17992"/>
    </reaction>
    <physiologicalReaction direction="left-to-right" evidence="1">
        <dbReference type="Rhea" id="RHEA:70276"/>
    </physiologicalReaction>
</comment>
<comment type="catalytic activity">
    <reaction evidence="1">
        <text>stachyose + H2O = raffinose + D-galactose</text>
        <dbReference type="Rhea" id="RHEA:70279"/>
        <dbReference type="ChEBI" id="CHEBI:4139"/>
        <dbReference type="ChEBI" id="CHEBI:15377"/>
        <dbReference type="ChEBI" id="CHEBI:16634"/>
        <dbReference type="ChEBI" id="CHEBI:17164"/>
    </reaction>
    <physiologicalReaction direction="left-to-right" evidence="1">
        <dbReference type="Rhea" id="RHEA:70280"/>
    </physiologicalReaction>
</comment>
<comment type="catalytic activity">
    <reaction evidence="1">
        <text>alpha-D-Gal-(1-&gt;6)-beta-D-Man-(1-&gt;4)-beta-D-Man-(1-&gt;4)-D-Man + H2O = beta-D-Man-(1-&gt;4)-beta-D-Man-(1-&gt;4)-D-Man + D-galactose</text>
        <dbReference type="Rhea" id="RHEA:70339"/>
        <dbReference type="ChEBI" id="CHEBI:4139"/>
        <dbReference type="ChEBI" id="CHEBI:15377"/>
        <dbReference type="ChEBI" id="CHEBI:62785"/>
        <dbReference type="ChEBI" id="CHEBI:189418"/>
    </reaction>
    <physiologicalReaction direction="left-to-right" evidence="1">
        <dbReference type="Rhea" id="RHEA:70340"/>
    </physiologicalReaction>
</comment>
<comment type="catalytic activity">
    <reaction evidence="1">
        <text>beta-D-Man-(1-&gt;4)-[alpha-D-Gal-(1-&gt;6)]-beta-D-Man-(1-&gt;4)-beta-D-Man-(1-&gt;4)-D-Man + H2O = beta-D-Man-(1-&gt;4)-beta-D-Man-(1-&gt;4)-beta-D-Man-(1-&gt;4)-D-Man + D-galactose</text>
        <dbReference type="Rhea" id="RHEA:70351"/>
        <dbReference type="ChEBI" id="CHEBI:4139"/>
        <dbReference type="ChEBI" id="CHEBI:15377"/>
        <dbReference type="ChEBI" id="CHEBI:62973"/>
        <dbReference type="ChEBI" id="CHEBI:189417"/>
    </reaction>
    <physiologicalReaction direction="left-to-right" evidence="1">
        <dbReference type="Rhea" id="RHEA:70352"/>
    </physiologicalReaction>
</comment>
<comment type="activity regulation">
    <text evidence="1">1 mM Hg(2+) and Ag(2+) decrease activity by 98% and 96%, respectively. 1 mM Para-chloromercuribenzoic acid (PCMB) completely inhibits enzymatic activity.</text>
</comment>
<comment type="biophysicochemical properties">
    <phDependence>
        <text evidence="1">Optimum pH is 5.0. Slowly inactivated above pH 8.0 and below pH 3.</text>
    </phDependence>
    <temperatureDependence>
        <text evidence="1">Optimum temperature is 45 degrees Celsius with p-nitrophenyl-alpha-D-galactopyranoside as substrate.</text>
    </temperatureDependence>
</comment>
<comment type="similarity">
    <text evidence="4">Belongs to the glycosyl hydrolase 27 family.</text>
</comment>
<organism>
    <name type="scientific">Oryza sativa subsp. japonica</name>
    <name type="common">Rice</name>
    <dbReference type="NCBI Taxonomy" id="39947"/>
    <lineage>
        <taxon>Eukaryota</taxon>
        <taxon>Viridiplantae</taxon>
        <taxon>Streptophyta</taxon>
        <taxon>Embryophyta</taxon>
        <taxon>Tracheophyta</taxon>
        <taxon>Spermatophyta</taxon>
        <taxon>Magnoliopsida</taxon>
        <taxon>Liliopsida</taxon>
        <taxon>Poales</taxon>
        <taxon>Poaceae</taxon>
        <taxon>BOP clade</taxon>
        <taxon>Oryzoideae</taxon>
        <taxon>Oryzeae</taxon>
        <taxon>Oryzinae</taxon>
        <taxon>Oryza</taxon>
        <taxon>Oryza sativa</taxon>
    </lineage>
</organism>
<sequence length="417" mass="45821">MARASSSSSPPSPRLLLLLLVAVAATLLPEAAALGNFTAESRGARWRSRRARRRAFENGLGRTPQMGWNSWNHFYCGINEQIIRETADALVNTGLAKLGYQYVNIDDCWAEYSRDSQGNFVPNRQTFPSGIKALADYVHAKGLKLGIYSDAGSQTCSNKMPGSLDHEEQDVKTFASWGVDYLKYDNCNDAGRSVMERYTRMSNAMKTYGKNIFFSLCEWGKENPATWAGRMGNSWRTTGDIADNWGSMTSRADENDQWAAYAGPGGWNDPDMLEVGNGGMSEAEYRSHFSIWALAKAPLLIGCDVRSMSQQTKNILSNSEVIAVNQDSLGVQGKKVQSDNGLEVWAGPLSNNRKAVVLWNRQSYQATITAHWSNIGLAGSVAVTARDLWAHSSFAAQGQISASVAPHDCKMYVLTPN</sequence>
<name>AGAL_ORYSJ</name>
<protein>
    <recommendedName>
        <fullName evidence="3">Alpha-galactosidase</fullName>
        <ecNumber evidence="1">3.2.1.22</ecNumber>
    </recommendedName>
    <alternativeName>
        <fullName evidence="4">Alpha-D-galactoside galactohydrolase</fullName>
    </alternativeName>
    <alternativeName>
        <fullName evidence="4">Melibiase</fullName>
    </alternativeName>
</protein>
<gene>
    <name evidence="7" type="ordered locus">Os10g0493600</name>
    <name evidence="6" type="ordered locus">LOC_Os10g35110</name>
    <name evidence="5" type="ORF">OSJNBa0041P03</name>
</gene>
<proteinExistence type="evidence at protein level"/>
<reference key="1">
    <citation type="journal article" date="2002" name="Phytochemistry">
        <title>Alpha-galactosidase from cultured rice (Oryza sativa L. var. Nipponbare) cells.</title>
        <authorList>
            <person name="Kim W.-D."/>
            <person name="Kobayashi O."/>
            <person name="Kaneko S."/>
            <person name="Sakakibara Y."/>
            <person name="Park G.-G."/>
            <person name="Kusakabe I."/>
            <person name="Tanaka H."/>
            <person name="Kobayashi H."/>
        </authorList>
    </citation>
    <scope>NUCLEOTIDE SEQUENCE [MRNA]</scope>
    <scope>PROTEIN SEQUENCE OF 56-95</scope>
    <scope>FUNCTION</scope>
    <scope>CATALYTIC ACTIVITY</scope>
    <scope>BIOPHYSICOCHEMICAL PROPERTIES</scope>
    <scope>ACTIVITY REGULATION</scope>
    <source>
        <strain>cv. Nipponbare</strain>
        <tissue>Callus</tissue>
    </source>
</reference>
<reference key="2">
    <citation type="journal article" date="2003" name="Science">
        <title>In-depth view of structure, activity, and evolution of rice chromosome 10.</title>
        <authorList>
            <person name="Yu Y."/>
            <person name="Rambo T."/>
            <person name="Currie J."/>
            <person name="Saski C."/>
            <person name="Kim H.-R."/>
            <person name="Collura K."/>
            <person name="Thompson S."/>
            <person name="Simmons J."/>
            <person name="Yang T.-J."/>
            <person name="Nah G."/>
            <person name="Patel A.J."/>
            <person name="Thurmond S."/>
            <person name="Henry D."/>
            <person name="Oates R."/>
            <person name="Palmer M."/>
            <person name="Pries G."/>
            <person name="Gibson J."/>
            <person name="Anderson H."/>
            <person name="Paradkar M."/>
            <person name="Crane L."/>
            <person name="Dale J."/>
            <person name="Carver M.B."/>
            <person name="Wood T."/>
            <person name="Frisch D."/>
            <person name="Engler F."/>
            <person name="Soderlund C."/>
            <person name="Palmer L.E."/>
            <person name="Teytelman L."/>
            <person name="Nascimento L."/>
            <person name="De la Bastide M."/>
            <person name="Spiegel L."/>
            <person name="Ware D."/>
            <person name="O'Shaughnessy A."/>
            <person name="Dike S."/>
            <person name="Dedhia N."/>
            <person name="Preston R."/>
            <person name="Huang E."/>
            <person name="Ferraro K."/>
            <person name="Kuit K."/>
            <person name="Miller B."/>
            <person name="Zutavern T."/>
            <person name="Katzenberger F."/>
            <person name="Muller S."/>
            <person name="Balija V."/>
            <person name="Martienssen R.A."/>
            <person name="Stein L."/>
            <person name="Minx P."/>
            <person name="Johnson D."/>
            <person name="Cordum H."/>
            <person name="Mardis E."/>
            <person name="Cheng Z."/>
            <person name="Jiang J."/>
            <person name="Wilson R."/>
            <person name="McCombie W.R."/>
            <person name="Wing R.A."/>
            <person name="Yuan Q."/>
            <person name="Ouyang S."/>
            <person name="Liu J."/>
            <person name="Jones K.M."/>
            <person name="Gansberger K."/>
            <person name="Moffat K."/>
            <person name="Hill J."/>
            <person name="Tsitrin T."/>
            <person name="Overton L."/>
            <person name="Bera J."/>
            <person name="Kim M."/>
            <person name="Jin S."/>
            <person name="Tallon L."/>
            <person name="Ciecko A."/>
            <person name="Pai G."/>
            <person name="Van Aken S."/>
            <person name="Utterback T."/>
            <person name="Reidmuller S."/>
            <person name="Bormann J."/>
            <person name="Feldblyum T."/>
            <person name="Hsiao J."/>
            <person name="Zismann V."/>
            <person name="Blunt S."/>
            <person name="de Vazeille A.R."/>
            <person name="Shaffer T."/>
            <person name="Koo H."/>
            <person name="Suh B."/>
            <person name="Yang Q."/>
            <person name="Haas B."/>
            <person name="Peterson J."/>
            <person name="Pertea M."/>
            <person name="Volfovsky N."/>
            <person name="Wortman J."/>
            <person name="White O."/>
            <person name="Salzberg S.L."/>
            <person name="Fraser C.M."/>
            <person name="Buell C.R."/>
            <person name="Messing J."/>
            <person name="Song R."/>
            <person name="Fuks G."/>
            <person name="Llaca V."/>
            <person name="Kovchak S."/>
            <person name="Young S."/>
            <person name="Bowers J.E."/>
            <person name="Paterson A.H."/>
            <person name="Johns M.A."/>
            <person name="Mao L."/>
            <person name="Pan H."/>
            <person name="Dean R.A."/>
        </authorList>
    </citation>
    <scope>NUCLEOTIDE SEQUENCE [LARGE SCALE GENOMIC DNA]</scope>
    <source>
        <strain>cv. Nipponbare</strain>
    </source>
</reference>
<reference key="3">
    <citation type="journal article" date="2005" name="Nature">
        <title>The map-based sequence of the rice genome.</title>
        <authorList>
            <consortium name="International rice genome sequencing project (IRGSP)"/>
        </authorList>
    </citation>
    <scope>NUCLEOTIDE SEQUENCE [LARGE SCALE GENOMIC DNA]</scope>
    <source>
        <strain>cv. Nipponbare</strain>
    </source>
</reference>
<reference key="4">
    <citation type="journal article" date="2008" name="Nucleic Acids Res.">
        <title>The rice annotation project database (RAP-DB): 2008 update.</title>
        <authorList>
            <consortium name="The rice annotation project (RAP)"/>
        </authorList>
    </citation>
    <scope>GENOME REANNOTATION</scope>
    <source>
        <strain>cv. Nipponbare</strain>
    </source>
</reference>
<reference key="5">
    <citation type="journal article" date="2013" name="Rice">
        <title>Improvement of the Oryza sativa Nipponbare reference genome using next generation sequence and optical map data.</title>
        <authorList>
            <person name="Kawahara Y."/>
            <person name="de la Bastide M."/>
            <person name="Hamilton J.P."/>
            <person name="Kanamori H."/>
            <person name="McCombie W.R."/>
            <person name="Ouyang S."/>
            <person name="Schwartz D.C."/>
            <person name="Tanaka T."/>
            <person name="Wu J."/>
            <person name="Zhou S."/>
            <person name="Childs K.L."/>
            <person name="Davidson R.M."/>
            <person name="Lin H."/>
            <person name="Quesada-Ocampo L."/>
            <person name="Vaillancourt B."/>
            <person name="Sakai H."/>
            <person name="Lee S.S."/>
            <person name="Kim J."/>
            <person name="Numa H."/>
            <person name="Itoh T."/>
            <person name="Buell C.R."/>
            <person name="Matsumoto T."/>
        </authorList>
    </citation>
    <scope>GENOME REANNOTATION</scope>
    <source>
        <strain>cv. Nipponbare</strain>
    </source>
</reference>
<reference key="6">
    <citation type="submission" date="2000-03" db="EMBL/GenBank/DDBJ databases">
        <authorList>
            <person name="Lee R.H."/>
            <person name="Chen S.C.G."/>
        </authorList>
    </citation>
    <scope>NUCLEOTIDE SEQUENCE [MRNA] OF 101-284</scope>
    <source>
        <strain>cv. Tainung 67</strain>
        <tissue>Leaf</tissue>
    </source>
</reference>
<reference key="7">
    <citation type="journal article" date="2003" name="J. Biol. Chem.">
        <title>Crystal structure of rice alpha-galactosidase complexed with D-galactose.</title>
        <authorList>
            <person name="Fujimoto Z."/>
            <person name="Kaneko S."/>
            <person name="Momma M."/>
            <person name="Kobayashi H."/>
            <person name="Mizuno H."/>
        </authorList>
    </citation>
    <scope>X-RAY CRYSTALLOGRAPHY (1.50 ANGSTROMS) OF 56-417 IN COMPLEX WITH ALPHA-D-GALACTOSE</scope>
    <scope>ACTIVE SITES</scope>
    <scope>DISULFIDE BONDS</scope>
</reference>
<dbReference type="EC" id="3.2.1.22" evidence="1"/>
<dbReference type="EMBL" id="AB039671">
    <property type="protein sequence ID" value="BAB12570.1"/>
    <property type="molecule type" value="mRNA"/>
</dbReference>
<dbReference type="EMBL" id="AC068950">
    <property type="protein sequence ID" value="AAM92832.1"/>
    <property type="molecule type" value="Genomic_DNA"/>
</dbReference>
<dbReference type="EMBL" id="DP000086">
    <property type="protein sequence ID" value="AAP54412.1"/>
    <property type="molecule type" value="Genomic_DNA"/>
</dbReference>
<dbReference type="EMBL" id="DP000086">
    <property type="protein sequence ID" value="ABB47819.1"/>
    <property type="molecule type" value="Genomic_DNA"/>
</dbReference>
<dbReference type="EMBL" id="AP008216">
    <property type="protein sequence ID" value="BAF26853.2"/>
    <property type="molecule type" value="Genomic_DNA"/>
</dbReference>
<dbReference type="EMBL" id="AP014966">
    <property type="protein sequence ID" value="BAT11449.1"/>
    <property type="molecule type" value="Genomic_DNA"/>
</dbReference>
<dbReference type="EMBL" id="AF251064">
    <property type="protein sequence ID" value="AAO85428.1"/>
    <property type="molecule type" value="mRNA"/>
</dbReference>
<dbReference type="RefSeq" id="XP_015613565.1">
    <property type="nucleotide sequence ID" value="XM_015758079.1"/>
</dbReference>
<dbReference type="RefSeq" id="XP_015613566.1">
    <property type="nucleotide sequence ID" value="XM_015758080.1"/>
</dbReference>
<dbReference type="PDB" id="1UAS">
    <property type="method" value="X-ray"/>
    <property type="resolution" value="1.50 A"/>
    <property type="chains" value="A=56-417"/>
</dbReference>
<dbReference type="PDBsum" id="1UAS"/>
<dbReference type="SMR" id="Q9FXT4"/>
<dbReference type="FunCoup" id="Q9FXT4">
    <property type="interactions" value="1253"/>
</dbReference>
<dbReference type="IntAct" id="Q9FXT4">
    <property type="interactions" value="9"/>
</dbReference>
<dbReference type="STRING" id="39947.Q9FXT4"/>
<dbReference type="ChEMBL" id="CHEMBL4537"/>
<dbReference type="CAZy" id="GH27">
    <property type="family name" value="Glycoside Hydrolase Family 27"/>
</dbReference>
<dbReference type="PaxDb" id="39947-Q9FXT4"/>
<dbReference type="EnsemblPlants" id="Os10t0493600-01">
    <property type="protein sequence ID" value="Os10t0493600-01"/>
    <property type="gene ID" value="Os10g0493600"/>
</dbReference>
<dbReference type="Gramene" id="Os10t0493600-01">
    <property type="protein sequence ID" value="Os10t0493600-01"/>
    <property type="gene ID" value="Os10g0493600"/>
</dbReference>
<dbReference type="KEGG" id="dosa:Os10g0493600"/>
<dbReference type="eggNOG" id="KOG2366">
    <property type="taxonomic scope" value="Eukaryota"/>
</dbReference>
<dbReference type="InParanoid" id="Q9FXT4"/>
<dbReference type="OMA" id="VHTWGMS"/>
<dbReference type="OrthoDB" id="5795902at2759"/>
<dbReference type="BRENDA" id="3.2.1.22">
    <property type="organism ID" value="4460"/>
</dbReference>
<dbReference type="EvolutionaryTrace" id="Q9FXT4"/>
<dbReference type="Proteomes" id="UP000000763">
    <property type="component" value="Chromosome 10"/>
</dbReference>
<dbReference type="Proteomes" id="UP000059680">
    <property type="component" value="Chromosome 10"/>
</dbReference>
<dbReference type="ExpressionAtlas" id="Q9FXT4">
    <property type="expression patterns" value="baseline and differential"/>
</dbReference>
<dbReference type="GO" id="GO:0009505">
    <property type="term" value="C:plant-type cell wall"/>
    <property type="evidence" value="ECO:0000318"/>
    <property type="project" value="GO_Central"/>
</dbReference>
<dbReference type="GO" id="GO:0004557">
    <property type="term" value="F:alpha-galactosidase activity"/>
    <property type="evidence" value="ECO:0000314"/>
    <property type="project" value="UniProtKB"/>
</dbReference>
<dbReference type="GO" id="GO:0052692">
    <property type="term" value="F:raffinose alpha-galactosidase activity"/>
    <property type="evidence" value="ECO:0007669"/>
    <property type="project" value="RHEA"/>
</dbReference>
<dbReference type="GO" id="GO:0051682">
    <property type="term" value="P:galactomannan catabolic process"/>
    <property type="evidence" value="ECO:0000314"/>
    <property type="project" value="UniProtKB"/>
</dbReference>
<dbReference type="CDD" id="cd14792">
    <property type="entry name" value="GH27"/>
    <property type="match status" value="1"/>
</dbReference>
<dbReference type="FunFam" id="2.60.40.1180:FF:000008">
    <property type="entry name" value="Alpha-galactosidase"/>
    <property type="match status" value="1"/>
</dbReference>
<dbReference type="FunFam" id="3.20.20.70:FF:000093">
    <property type="entry name" value="Alpha-galactosidase"/>
    <property type="match status" value="1"/>
</dbReference>
<dbReference type="Gene3D" id="3.20.20.70">
    <property type="entry name" value="Aldolase class I"/>
    <property type="match status" value="1"/>
</dbReference>
<dbReference type="Gene3D" id="2.60.40.1180">
    <property type="entry name" value="Golgi alpha-mannosidase II"/>
    <property type="match status" value="1"/>
</dbReference>
<dbReference type="InterPro" id="IPR013785">
    <property type="entry name" value="Aldolase_TIM"/>
</dbReference>
<dbReference type="InterPro" id="IPR002241">
    <property type="entry name" value="Glyco_hydro_27"/>
</dbReference>
<dbReference type="InterPro" id="IPR000111">
    <property type="entry name" value="Glyco_hydro_27/36_CS"/>
</dbReference>
<dbReference type="InterPro" id="IPR013780">
    <property type="entry name" value="Glyco_hydro_b"/>
</dbReference>
<dbReference type="InterPro" id="IPR017853">
    <property type="entry name" value="Glycoside_hydrolase_SF"/>
</dbReference>
<dbReference type="InterPro" id="IPR041233">
    <property type="entry name" value="Melibiase_C"/>
</dbReference>
<dbReference type="PANTHER" id="PTHR11452:SF90">
    <property type="entry name" value="ALPHA-GALACTOSIDASE"/>
    <property type="match status" value="1"/>
</dbReference>
<dbReference type="PANTHER" id="PTHR11452">
    <property type="entry name" value="ALPHA-GALACTOSIDASE/ALPHA-N-ACETYLGALACTOSAMINIDASE"/>
    <property type="match status" value="1"/>
</dbReference>
<dbReference type="Pfam" id="PF16499">
    <property type="entry name" value="Melibiase_2"/>
    <property type="match status" value="1"/>
</dbReference>
<dbReference type="Pfam" id="PF17801">
    <property type="entry name" value="Melibiase_C"/>
    <property type="match status" value="1"/>
</dbReference>
<dbReference type="PRINTS" id="PR00740">
    <property type="entry name" value="GLHYDRLASE27"/>
</dbReference>
<dbReference type="SUPFAM" id="SSF51445">
    <property type="entry name" value="(Trans)glycosidases"/>
    <property type="match status" value="1"/>
</dbReference>
<dbReference type="SUPFAM" id="SSF51011">
    <property type="entry name" value="Glycosyl hydrolase domain"/>
    <property type="match status" value="1"/>
</dbReference>
<dbReference type="PROSITE" id="PS00512">
    <property type="entry name" value="ALPHA_GALACTOSIDASE"/>
    <property type="match status" value="1"/>
</dbReference>